<keyword id="KW-1185">Reference proteome</keyword>
<keyword id="KW-0687">Ribonucleoprotein</keyword>
<keyword id="KW-0689">Ribosomal protein</keyword>
<keyword id="KW-0694">RNA-binding</keyword>
<keyword id="KW-0699">rRNA-binding</keyword>
<feature type="chain" id="PRO_1000144006" description="Large ribosomal subunit protein uL6">
    <location>
        <begin position="1"/>
        <end position="178"/>
    </location>
</feature>
<name>RL6_LIMF3</name>
<sequence>MSRIGYKEIDLPAGVEVSQEGNVVTVKGPKGTLSREISPLITMSVEGNVVKFERSGEDNKVRALHGTTRANVNNMVEGVVNGFKKTLKLVGVGYRAQFKGDKLILTVGYSNPVEMTKPAEVEIAVPDNTTIEISGIDKQEVGDFAAEVRAVRSPEPYKGKGIRYENEHIVRNEGKTGK</sequence>
<organism>
    <name type="scientific">Limosilactobacillus fermentum (strain NBRC 3956 / LMG 18251)</name>
    <name type="common">Lactobacillus fermentum</name>
    <dbReference type="NCBI Taxonomy" id="334390"/>
    <lineage>
        <taxon>Bacteria</taxon>
        <taxon>Bacillati</taxon>
        <taxon>Bacillota</taxon>
        <taxon>Bacilli</taxon>
        <taxon>Lactobacillales</taxon>
        <taxon>Lactobacillaceae</taxon>
        <taxon>Limosilactobacillus</taxon>
    </lineage>
</organism>
<comment type="function">
    <text evidence="1">This protein binds to the 23S rRNA, and is important in its secondary structure. It is located near the subunit interface in the base of the L7/L12 stalk, and near the tRNA binding site of the peptidyltransferase center.</text>
</comment>
<comment type="subunit">
    <text evidence="1">Part of the 50S ribosomal subunit.</text>
</comment>
<comment type="similarity">
    <text evidence="1">Belongs to the universal ribosomal protein uL6 family.</text>
</comment>
<accession>B2GDV4</accession>
<evidence type="ECO:0000255" key="1">
    <source>
        <dbReference type="HAMAP-Rule" id="MF_01365"/>
    </source>
</evidence>
<evidence type="ECO:0000305" key="2"/>
<proteinExistence type="inferred from homology"/>
<reference key="1">
    <citation type="journal article" date="2008" name="DNA Res.">
        <title>Comparative genome analysis of Lactobacillus reuteri and Lactobacillus fermentum reveal a genomic island for reuterin and cobalamin production.</title>
        <authorList>
            <person name="Morita H."/>
            <person name="Toh H."/>
            <person name="Fukuda S."/>
            <person name="Horikawa H."/>
            <person name="Oshima K."/>
            <person name="Suzuki T."/>
            <person name="Murakami M."/>
            <person name="Hisamatsu S."/>
            <person name="Kato Y."/>
            <person name="Takizawa T."/>
            <person name="Fukuoka H."/>
            <person name="Yoshimura T."/>
            <person name="Itoh K."/>
            <person name="O'Sullivan D.J."/>
            <person name="McKay L.L."/>
            <person name="Ohno H."/>
            <person name="Kikuchi J."/>
            <person name="Masaoka T."/>
            <person name="Hattori M."/>
        </authorList>
    </citation>
    <scope>NUCLEOTIDE SEQUENCE [LARGE SCALE GENOMIC DNA]</scope>
    <source>
        <strain>NBRC 3956 / LMG 18251</strain>
    </source>
</reference>
<protein>
    <recommendedName>
        <fullName evidence="1">Large ribosomal subunit protein uL6</fullName>
    </recommendedName>
    <alternativeName>
        <fullName evidence="2">50S ribosomal protein L6</fullName>
    </alternativeName>
</protein>
<dbReference type="EMBL" id="AP008937">
    <property type="protein sequence ID" value="BAG27836.1"/>
    <property type="molecule type" value="Genomic_DNA"/>
</dbReference>
<dbReference type="RefSeq" id="WP_012391594.1">
    <property type="nucleotide sequence ID" value="NC_010610.1"/>
</dbReference>
<dbReference type="SMR" id="B2GDV4"/>
<dbReference type="KEGG" id="lfe:LAF_1500"/>
<dbReference type="PATRIC" id="fig|334390.5.peg.1646"/>
<dbReference type="eggNOG" id="COG0097">
    <property type="taxonomic scope" value="Bacteria"/>
</dbReference>
<dbReference type="HOGENOM" id="CLU_065464_1_2_9"/>
<dbReference type="Proteomes" id="UP000001697">
    <property type="component" value="Chromosome"/>
</dbReference>
<dbReference type="GO" id="GO:0022625">
    <property type="term" value="C:cytosolic large ribosomal subunit"/>
    <property type="evidence" value="ECO:0007669"/>
    <property type="project" value="TreeGrafter"/>
</dbReference>
<dbReference type="GO" id="GO:0019843">
    <property type="term" value="F:rRNA binding"/>
    <property type="evidence" value="ECO:0007669"/>
    <property type="project" value="UniProtKB-UniRule"/>
</dbReference>
<dbReference type="GO" id="GO:0003735">
    <property type="term" value="F:structural constituent of ribosome"/>
    <property type="evidence" value="ECO:0007669"/>
    <property type="project" value="InterPro"/>
</dbReference>
<dbReference type="GO" id="GO:0002181">
    <property type="term" value="P:cytoplasmic translation"/>
    <property type="evidence" value="ECO:0007669"/>
    <property type="project" value="TreeGrafter"/>
</dbReference>
<dbReference type="FunFam" id="3.90.930.12:FF:000001">
    <property type="entry name" value="50S ribosomal protein L6"/>
    <property type="match status" value="1"/>
</dbReference>
<dbReference type="FunFam" id="3.90.930.12:FF:000002">
    <property type="entry name" value="50S ribosomal protein L6"/>
    <property type="match status" value="1"/>
</dbReference>
<dbReference type="Gene3D" id="3.90.930.12">
    <property type="entry name" value="Ribosomal protein L6, alpha-beta domain"/>
    <property type="match status" value="2"/>
</dbReference>
<dbReference type="HAMAP" id="MF_01365_B">
    <property type="entry name" value="Ribosomal_uL6_B"/>
    <property type="match status" value="1"/>
</dbReference>
<dbReference type="InterPro" id="IPR000702">
    <property type="entry name" value="Ribosomal_uL6-like"/>
</dbReference>
<dbReference type="InterPro" id="IPR036789">
    <property type="entry name" value="Ribosomal_uL6-like_a/b-dom_sf"/>
</dbReference>
<dbReference type="InterPro" id="IPR020040">
    <property type="entry name" value="Ribosomal_uL6_a/b-dom"/>
</dbReference>
<dbReference type="InterPro" id="IPR019906">
    <property type="entry name" value="Ribosomal_uL6_bac-type"/>
</dbReference>
<dbReference type="InterPro" id="IPR002358">
    <property type="entry name" value="Ribosomal_uL6_CS"/>
</dbReference>
<dbReference type="NCBIfam" id="TIGR03654">
    <property type="entry name" value="L6_bact"/>
    <property type="match status" value="1"/>
</dbReference>
<dbReference type="PANTHER" id="PTHR11655">
    <property type="entry name" value="60S/50S RIBOSOMAL PROTEIN L6/L9"/>
    <property type="match status" value="1"/>
</dbReference>
<dbReference type="PANTHER" id="PTHR11655:SF14">
    <property type="entry name" value="LARGE RIBOSOMAL SUBUNIT PROTEIN UL6M"/>
    <property type="match status" value="1"/>
</dbReference>
<dbReference type="Pfam" id="PF00347">
    <property type="entry name" value="Ribosomal_L6"/>
    <property type="match status" value="2"/>
</dbReference>
<dbReference type="PIRSF" id="PIRSF002162">
    <property type="entry name" value="Ribosomal_L6"/>
    <property type="match status" value="1"/>
</dbReference>
<dbReference type="PRINTS" id="PR00059">
    <property type="entry name" value="RIBOSOMALL6"/>
</dbReference>
<dbReference type="SUPFAM" id="SSF56053">
    <property type="entry name" value="Ribosomal protein L6"/>
    <property type="match status" value="2"/>
</dbReference>
<dbReference type="PROSITE" id="PS00525">
    <property type="entry name" value="RIBOSOMAL_L6_1"/>
    <property type="match status" value="1"/>
</dbReference>
<gene>
    <name evidence="1" type="primary">rplF</name>
    <name type="ordered locus">LAF_1500</name>
</gene>